<feature type="chain" id="PRO_0000441649" description="Probable fused nickel transport protein LarMN">
    <location>
        <begin position="1"/>
        <end position="328"/>
    </location>
</feature>
<feature type="transmembrane region" description="Helical" evidence="1">
    <location>
        <begin position="8"/>
        <end position="28"/>
    </location>
</feature>
<feature type="transmembrane region" description="Helical" evidence="1">
    <location>
        <begin position="42"/>
        <end position="62"/>
    </location>
</feature>
<feature type="transmembrane region" description="Helical" evidence="1">
    <location>
        <begin position="75"/>
        <end position="95"/>
    </location>
</feature>
<feature type="transmembrane region" description="Helical" evidence="1">
    <location>
        <begin position="103"/>
        <end position="123"/>
    </location>
</feature>
<feature type="transmembrane region" description="Helical" evidence="1">
    <location>
        <begin position="138"/>
        <end position="158"/>
    </location>
</feature>
<feature type="transmembrane region" description="Helical" evidence="1">
    <location>
        <begin position="187"/>
        <end position="207"/>
    </location>
</feature>
<feature type="transmembrane region" description="Helical" evidence="1">
    <location>
        <begin position="229"/>
        <end position="249"/>
    </location>
</feature>
<feature type="transmembrane region" description="Helical" evidence="1">
    <location>
        <begin position="296"/>
        <end position="316"/>
    </location>
</feature>
<gene>
    <name evidence="3" type="primary">larMN</name>
    <name evidence="6" type="synonym">cbiM</name>
    <name evidence="6" type="ordered locus">lp_0102</name>
</gene>
<protein>
    <recommendedName>
        <fullName evidence="4">Probable fused nickel transport protein LarMN</fullName>
    </recommendedName>
    <alternativeName>
        <fullName evidence="4">Probable energy-coupling factor transporter substrate-capture protein LarMN</fullName>
        <shortName evidence="4">ECF transporter S component LarMN</shortName>
    </alternativeName>
</protein>
<proteinExistence type="evidence at transcript level"/>
<comment type="function">
    <text evidence="5">Probably part of the energy-coupling factor (ECF) transporter complex LarMNQO involved in nickel import.</text>
</comment>
<comment type="subunit">
    <text evidence="4">May form an energy-coupling factor (ECF) transporter complex composed of an ATP-binding protein (A component, LarO), a transmembrane protein (T component, LarQ) and a fused possible substrate-capture protein (S component, LarMN) of unknown stoichiometry.</text>
</comment>
<comment type="subcellular location">
    <subcellularLocation>
        <location evidence="1">Cell membrane</location>
        <topology evidence="1">Multi-pass membrane protein</topology>
    </subcellularLocation>
</comment>
<comment type="induction">
    <text evidence="2">Induced by L-lactate but not by a racemic mixture of DL-lactate. Makes part of the larR(MN)QO operon.</text>
</comment>
<comment type="similarity">
    <text evidence="4">Belongs to the CbiM family. NikM subfamily.</text>
</comment>
<dbReference type="EMBL" id="AL935263">
    <property type="protein sequence ID" value="CCC77658.1"/>
    <property type="molecule type" value="Genomic_DNA"/>
</dbReference>
<dbReference type="RefSeq" id="WP_003641709.1">
    <property type="nucleotide sequence ID" value="NC_004567.2"/>
</dbReference>
<dbReference type="RefSeq" id="YP_004888172.1">
    <property type="nucleotide sequence ID" value="NC_004567.2"/>
</dbReference>
<dbReference type="SMR" id="F9USS7"/>
<dbReference type="STRING" id="220668.lp_0102"/>
<dbReference type="EnsemblBacteria" id="CCC77658">
    <property type="protein sequence ID" value="CCC77658"/>
    <property type="gene ID" value="lp_0102"/>
</dbReference>
<dbReference type="GeneID" id="89667852"/>
<dbReference type="KEGG" id="lpl:lp_0102"/>
<dbReference type="PATRIC" id="fig|220668.9.peg.82"/>
<dbReference type="eggNOG" id="COG0310">
    <property type="taxonomic scope" value="Bacteria"/>
</dbReference>
<dbReference type="HOGENOM" id="CLU_052508_2_0_9"/>
<dbReference type="OrthoDB" id="9809846at2"/>
<dbReference type="PhylomeDB" id="F9USS7"/>
<dbReference type="Proteomes" id="UP000000432">
    <property type="component" value="Chromosome"/>
</dbReference>
<dbReference type="GO" id="GO:0005886">
    <property type="term" value="C:plasma membrane"/>
    <property type="evidence" value="ECO:0007669"/>
    <property type="project" value="UniProtKB-SubCell"/>
</dbReference>
<dbReference type="GO" id="GO:0015675">
    <property type="term" value="P:nickel cation transport"/>
    <property type="evidence" value="ECO:0007669"/>
    <property type="project" value="UniProtKB-KW"/>
</dbReference>
<dbReference type="Gene3D" id="1.10.1760.20">
    <property type="match status" value="1"/>
</dbReference>
<dbReference type="InterPro" id="IPR002751">
    <property type="entry name" value="CbiM/NikMN"/>
</dbReference>
<dbReference type="InterPro" id="IPR025937">
    <property type="entry name" value="PDGLE_dom"/>
</dbReference>
<dbReference type="NCBIfam" id="NF005598">
    <property type="entry name" value="PRK07331.1"/>
    <property type="match status" value="1"/>
</dbReference>
<dbReference type="NCBIfam" id="NF008873">
    <property type="entry name" value="PRK11909.1"/>
    <property type="match status" value="1"/>
</dbReference>
<dbReference type="PANTHER" id="PTHR34229">
    <property type="entry name" value="METAL TRANSPORT PROTEIN HI_1621-RELATED"/>
    <property type="match status" value="1"/>
</dbReference>
<dbReference type="PANTHER" id="PTHR34229:SF1">
    <property type="entry name" value="METAL TRANSPORT PROTEIN HI_1621-RELATED"/>
    <property type="match status" value="1"/>
</dbReference>
<dbReference type="Pfam" id="PF01891">
    <property type="entry name" value="CbiM"/>
    <property type="match status" value="1"/>
</dbReference>
<dbReference type="Pfam" id="PF13190">
    <property type="entry name" value="PDGLE"/>
    <property type="match status" value="1"/>
</dbReference>
<sequence length="328" mass="35166">MHIPDNYLSPATCGTLVTAMAPVWTVAVLKVKVQIKKHHETLPMLGIAASLAFLIMMFNLPIPGGTTAHAVGGTLLAVLIGPWAACLALTVTLLLQALLFGDGGILAFGANALNMAVIMPFVGYACYRLGQKWHHEKLGLAIGAYLGINMAALVAGIELGLQPILAHTASGAPLYCPYGLNITIPAMLTAHLLVAGWVEVVFTLLVFQFVKRVAPTNLYQTPTRRNQRPWIALLLGLAVLSPLGLLASNTAWGEWSPQELQQRLAQQHISTHAPQGMVHGFHFQALFSDYAIAGLPVSVGYILSAITAVLIFLLLIRGLQHETDTSQH</sequence>
<organism>
    <name type="scientific">Lactiplantibacillus plantarum (strain ATCC BAA-793 / NCIMB 8826 / WCFS1)</name>
    <name type="common">Lactobacillus plantarum</name>
    <dbReference type="NCBI Taxonomy" id="220668"/>
    <lineage>
        <taxon>Bacteria</taxon>
        <taxon>Bacillati</taxon>
        <taxon>Bacillota</taxon>
        <taxon>Bacilli</taxon>
        <taxon>Lactobacillales</taxon>
        <taxon>Lactobacillaceae</taxon>
        <taxon>Lactiplantibacillus</taxon>
    </lineage>
</organism>
<evidence type="ECO:0000255" key="1"/>
<evidence type="ECO:0000269" key="2">
    <source>
    </source>
</evidence>
<evidence type="ECO:0000303" key="3">
    <source>
    </source>
</evidence>
<evidence type="ECO:0000305" key="4"/>
<evidence type="ECO:0000305" key="5">
    <source>
    </source>
</evidence>
<evidence type="ECO:0000312" key="6">
    <source>
        <dbReference type="EMBL" id="CCC77658.1"/>
    </source>
</evidence>
<reference key="1">
    <citation type="journal article" date="2003" name="Proc. Natl. Acad. Sci. U.S.A.">
        <title>Complete genome sequence of Lactobacillus plantarum WCFS1.</title>
        <authorList>
            <person name="Kleerebezem M."/>
            <person name="Boekhorst J."/>
            <person name="van Kranenburg R."/>
            <person name="Molenaar D."/>
            <person name="Kuipers O.P."/>
            <person name="Leer R."/>
            <person name="Tarchini R."/>
            <person name="Peters S.A."/>
            <person name="Sandbrink H.M."/>
            <person name="Fiers M.W.E.J."/>
            <person name="Stiekema W."/>
            <person name="Klein Lankhorst R.M."/>
            <person name="Bron P.A."/>
            <person name="Hoffer S.M."/>
            <person name="Nierop Groot M.N."/>
            <person name="Kerkhoven R."/>
            <person name="De Vries M."/>
            <person name="Ursing B."/>
            <person name="De Vos W.M."/>
            <person name="Siezen R.J."/>
        </authorList>
    </citation>
    <scope>NUCLEOTIDE SEQUENCE [LARGE SCALE GENOMIC DNA]</scope>
    <source>
        <strain>ATCC BAA-793 / NCIMB 8826 / WCFS1</strain>
    </source>
</reference>
<reference key="2">
    <citation type="journal article" date="2012" name="J. Bacteriol.">
        <title>Complete resequencing and reannotation of the Lactobacillus plantarum WCFS1 genome.</title>
        <authorList>
            <person name="Siezen R.J."/>
            <person name="Francke C."/>
            <person name="Renckens B."/>
            <person name="Boekhorst J."/>
            <person name="Wels M."/>
            <person name="Kleerebezem M."/>
            <person name="van Hijum S.A."/>
        </authorList>
    </citation>
    <scope>NUCLEOTIDE SEQUENCE [LARGE SCALE GENOMIC DNA]</scope>
    <scope>GENOME REANNOTATION</scope>
    <source>
        <strain>ATCC BAA-793 / NCIMB 8826 / WCFS1</strain>
    </source>
</reference>
<reference key="3">
    <citation type="journal article" date="2014" name="Nat. Commun.">
        <title>Lactate racemase is a nickel-dependent enzyme activated by a widespread maturation system.</title>
        <authorList>
            <person name="Desguin B."/>
            <person name="Goffin P."/>
            <person name="Viaene E."/>
            <person name="Kleerebezem M."/>
            <person name="Martin-Diaconescu V."/>
            <person name="Maroney M.J."/>
            <person name="Declercq J.P."/>
            <person name="Soumillion P."/>
            <person name="Hols P."/>
        </authorList>
    </citation>
    <scope>FUNCTION</scope>
    <scope>INDUCTION</scope>
    <source>
        <strain>ATCC BAA-793 / NCIMB 8826 / WCFS1</strain>
    </source>
</reference>
<keyword id="KW-1003">Cell membrane</keyword>
<keyword id="KW-0406">Ion transport</keyword>
<keyword id="KW-0472">Membrane</keyword>
<keyword id="KW-0533">Nickel</keyword>
<keyword id="KW-0921">Nickel transport</keyword>
<keyword id="KW-1185">Reference proteome</keyword>
<keyword id="KW-0812">Transmembrane</keyword>
<keyword id="KW-1133">Transmembrane helix</keyword>
<keyword id="KW-0813">Transport</keyword>
<name>LARMN_LACPL</name>
<accession>F9USS7</accession>